<accession>A9A9B8</accession>
<keyword id="KW-0687">Ribonucleoprotein</keyword>
<keyword id="KW-0689">Ribosomal protein</keyword>
<keyword id="KW-0694">RNA-binding</keyword>
<keyword id="KW-0699">rRNA-binding</keyword>
<organism>
    <name type="scientific">Methanococcus maripaludis (strain C6 / ATCC BAA-1332)</name>
    <dbReference type="NCBI Taxonomy" id="444158"/>
    <lineage>
        <taxon>Archaea</taxon>
        <taxon>Methanobacteriati</taxon>
        <taxon>Methanobacteriota</taxon>
        <taxon>Methanomada group</taxon>
        <taxon>Methanococci</taxon>
        <taxon>Methanococcales</taxon>
        <taxon>Methanococcaceae</taxon>
        <taxon>Methanococcus</taxon>
    </lineage>
</organism>
<feature type="chain" id="PRO_1000141886" description="Large ribosomal subunit protein uL3">
    <location>
        <begin position="1"/>
        <end position="334"/>
    </location>
</feature>
<feature type="region of interest" description="Disordered" evidence="2">
    <location>
        <begin position="1"/>
        <end position="20"/>
    </location>
</feature>
<feature type="compositionally biased region" description="Basic residues" evidence="2">
    <location>
        <begin position="1"/>
        <end position="10"/>
    </location>
</feature>
<gene>
    <name evidence="1" type="primary">rpl3</name>
    <name type="ordered locus">MmarC6_1127</name>
</gene>
<comment type="function">
    <text evidence="1">One of the primary rRNA binding proteins, it binds directly near the 3'-end of the 23S rRNA, where it nucleates assembly of the 50S subunit.</text>
</comment>
<comment type="subunit">
    <text evidence="1">Part of the 50S ribosomal subunit. Forms a cluster with proteins L14 and L24e.</text>
</comment>
<comment type="similarity">
    <text evidence="1">Belongs to the universal ribosomal protein uL3 family.</text>
</comment>
<reference key="1">
    <citation type="submission" date="2007-10" db="EMBL/GenBank/DDBJ databases">
        <title>Complete sequence of Methanococcus maripaludis C6.</title>
        <authorList>
            <consortium name="US DOE Joint Genome Institute"/>
            <person name="Copeland A."/>
            <person name="Lucas S."/>
            <person name="Lapidus A."/>
            <person name="Barry K."/>
            <person name="Glavina del Rio T."/>
            <person name="Dalin E."/>
            <person name="Tice H."/>
            <person name="Pitluck S."/>
            <person name="Clum A."/>
            <person name="Schmutz J."/>
            <person name="Larimer F."/>
            <person name="Land M."/>
            <person name="Hauser L."/>
            <person name="Kyrpides N."/>
            <person name="Mikhailova N."/>
            <person name="Sieprawska-Lupa M."/>
            <person name="Whitman W.B."/>
            <person name="Richardson P."/>
        </authorList>
    </citation>
    <scope>NUCLEOTIDE SEQUENCE [LARGE SCALE GENOMIC DNA]</scope>
    <source>
        <strain>C6 / ATCC BAA-1332</strain>
    </source>
</reference>
<dbReference type="EMBL" id="CP000867">
    <property type="protein sequence ID" value="ABX01941.1"/>
    <property type="molecule type" value="Genomic_DNA"/>
</dbReference>
<dbReference type="SMR" id="A9A9B8"/>
<dbReference type="STRING" id="444158.MmarC6_1127"/>
<dbReference type="KEGG" id="mmx:MmarC6_1127"/>
<dbReference type="eggNOG" id="arCOG04070">
    <property type="taxonomic scope" value="Archaea"/>
</dbReference>
<dbReference type="HOGENOM" id="CLU_033361_2_0_2"/>
<dbReference type="OrthoDB" id="6121at2157"/>
<dbReference type="PhylomeDB" id="A9A9B8"/>
<dbReference type="GO" id="GO:0022625">
    <property type="term" value="C:cytosolic large ribosomal subunit"/>
    <property type="evidence" value="ECO:0007669"/>
    <property type="project" value="TreeGrafter"/>
</dbReference>
<dbReference type="GO" id="GO:0019843">
    <property type="term" value="F:rRNA binding"/>
    <property type="evidence" value="ECO:0007669"/>
    <property type="project" value="UniProtKB-UniRule"/>
</dbReference>
<dbReference type="GO" id="GO:0003735">
    <property type="term" value="F:structural constituent of ribosome"/>
    <property type="evidence" value="ECO:0007669"/>
    <property type="project" value="InterPro"/>
</dbReference>
<dbReference type="GO" id="GO:0006412">
    <property type="term" value="P:translation"/>
    <property type="evidence" value="ECO:0007669"/>
    <property type="project" value="UniProtKB-UniRule"/>
</dbReference>
<dbReference type="Gene3D" id="3.30.1430.10">
    <property type="match status" value="1"/>
</dbReference>
<dbReference type="Gene3D" id="4.10.960.10">
    <property type="entry name" value="Ribosomal protein L3, domain 3"/>
    <property type="match status" value="1"/>
</dbReference>
<dbReference type="Gene3D" id="2.40.30.10">
    <property type="entry name" value="Translation factors"/>
    <property type="match status" value="1"/>
</dbReference>
<dbReference type="HAMAP" id="MF_01325_A">
    <property type="entry name" value="Ribosomal_uL3_A"/>
    <property type="match status" value="1"/>
</dbReference>
<dbReference type="InterPro" id="IPR045077">
    <property type="entry name" value="L3_arc_euk"/>
</dbReference>
<dbReference type="InterPro" id="IPR044892">
    <property type="entry name" value="Ribosomal_L3_dom_3_arc_sf"/>
</dbReference>
<dbReference type="InterPro" id="IPR000597">
    <property type="entry name" value="Ribosomal_uL3"/>
</dbReference>
<dbReference type="InterPro" id="IPR019928">
    <property type="entry name" value="Ribosomal_uL3_arc"/>
</dbReference>
<dbReference type="InterPro" id="IPR019926">
    <property type="entry name" value="Ribosomal_uL3_CS"/>
</dbReference>
<dbReference type="InterPro" id="IPR009000">
    <property type="entry name" value="Transl_B-barrel_sf"/>
</dbReference>
<dbReference type="NCBIfam" id="TIGR03626">
    <property type="entry name" value="L3_arch"/>
    <property type="match status" value="1"/>
</dbReference>
<dbReference type="NCBIfam" id="NF003261">
    <property type="entry name" value="PRK04231.1"/>
    <property type="match status" value="1"/>
</dbReference>
<dbReference type="PANTHER" id="PTHR11363">
    <property type="entry name" value="60S RIBOSOMAL PROTEIN L3-RELATED"/>
    <property type="match status" value="1"/>
</dbReference>
<dbReference type="PANTHER" id="PTHR11363:SF5">
    <property type="entry name" value="LARGE RIBOSOMAL SUBUNIT PROTEIN UL3"/>
    <property type="match status" value="1"/>
</dbReference>
<dbReference type="Pfam" id="PF00297">
    <property type="entry name" value="Ribosomal_L3"/>
    <property type="match status" value="1"/>
</dbReference>
<dbReference type="SUPFAM" id="SSF50447">
    <property type="entry name" value="Translation proteins"/>
    <property type="match status" value="1"/>
</dbReference>
<dbReference type="PROSITE" id="PS00474">
    <property type="entry name" value="RIBOSOMAL_L3"/>
    <property type="match status" value="1"/>
</dbReference>
<protein>
    <recommendedName>
        <fullName evidence="1">Large ribosomal subunit protein uL3</fullName>
    </recommendedName>
    <alternativeName>
        <fullName evidence="3">50S ribosomal protein L3</fullName>
    </alternativeName>
</protein>
<sequence>MGMKKSRPRRGSLAFSPRKRAKKLVPKIRSWPADKKVGLQAFPVYKAGTTHALLIENNPKSPNNGQEVFTPVTVLETPDVTVAGIRLYEKTTKGLQALTEVWAEQLDGDLGRKLTLVKKEEKKTADALDAVLEKATEVRAIVHTNPKTTGIPKKKPEVVEIRIGGSSVAERLAYAKEILGKTLAISDVFEAGEIIDTLAITKGKGFQGSVKRWGIKVQFGKHQRKGVGRHTGSIGPWRPRRVMWTVPLPGQMGFHQRTEYNKRILKLGSEGAEITPKGGFLNYGAVKNGYVVVKGTVQGPAKRLVVLRGSVRAAEDKFGLPEVAYISTESKQGN</sequence>
<name>RL3_METM6</name>
<evidence type="ECO:0000255" key="1">
    <source>
        <dbReference type="HAMAP-Rule" id="MF_01325"/>
    </source>
</evidence>
<evidence type="ECO:0000256" key="2">
    <source>
        <dbReference type="SAM" id="MobiDB-lite"/>
    </source>
</evidence>
<evidence type="ECO:0000305" key="3"/>
<proteinExistence type="inferred from homology"/>